<proteinExistence type="inferred from homology"/>
<sequence>MLEKEEIVSPNLEELKSHYHSIITLLGEDAGREGLLKTPERVAKAMLSLTKGYHMDPHEVLRSAKFQEEYSQMVIVKDIDFFSLCEHHMLPFYGKAHVAYIPNGYITGLSKIARVVDIFSHRLQVQERMTLQIKDCIQETLNPLGVMVVVEAKHMCMQMRGVEKQNSITTTSDFTGAFNQAKTREEFMNLIQHGRV</sequence>
<evidence type="ECO:0000250" key="1"/>
<evidence type="ECO:0000255" key="2">
    <source>
        <dbReference type="HAMAP-Rule" id="MF_00223"/>
    </source>
</evidence>
<gene>
    <name evidence="2" type="primary">folE</name>
    <name type="ordered locus">BT_3931</name>
</gene>
<dbReference type="EC" id="3.5.4.16" evidence="2"/>
<dbReference type="EMBL" id="AE015928">
    <property type="protein sequence ID" value="AAO79036.1"/>
    <property type="molecule type" value="Genomic_DNA"/>
</dbReference>
<dbReference type="RefSeq" id="NP_812842.1">
    <property type="nucleotide sequence ID" value="NC_004663.1"/>
</dbReference>
<dbReference type="RefSeq" id="WP_008760851.1">
    <property type="nucleotide sequence ID" value="NZ_UYXG01000011.1"/>
</dbReference>
<dbReference type="SMR" id="Q8A0U0"/>
<dbReference type="FunCoup" id="Q8A0U0">
    <property type="interactions" value="418"/>
</dbReference>
<dbReference type="STRING" id="226186.BT_3931"/>
<dbReference type="PaxDb" id="226186-BT_3931"/>
<dbReference type="EnsemblBacteria" id="AAO79036">
    <property type="protein sequence ID" value="AAO79036"/>
    <property type="gene ID" value="BT_3931"/>
</dbReference>
<dbReference type="GeneID" id="69588701"/>
<dbReference type="KEGG" id="bth:BT_3931"/>
<dbReference type="PATRIC" id="fig|226186.12.peg.3996"/>
<dbReference type="eggNOG" id="COG0302">
    <property type="taxonomic scope" value="Bacteria"/>
</dbReference>
<dbReference type="HOGENOM" id="CLU_049768_3_1_10"/>
<dbReference type="InParanoid" id="Q8A0U0"/>
<dbReference type="OrthoDB" id="9801207at2"/>
<dbReference type="UniPathway" id="UPA00848">
    <property type="reaction ID" value="UER00151"/>
</dbReference>
<dbReference type="Proteomes" id="UP000001414">
    <property type="component" value="Chromosome"/>
</dbReference>
<dbReference type="GO" id="GO:0005737">
    <property type="term" value="C:cytoplasm"/>
    <property type="evidence" value="ECO:0000318"/>
    <property type="project" value="GO_Central"/>
</dbReference>
<dbReference type="GO" id="GO:0005525">
    <property type="term" value="F:GTP binding"/>
    <property type="evidence" value="ECO:0000318"/>
    <property type="project" value="GO_Central"/>
</dbReference>
<dbReference type="GO" id="GO:0003934">
    <property type="term" value="F:GTP cyclohydrolase I activity"/>
    <property type="evidence" value="ECO:0000318"/>
    <property type="project" value="GO_Central"/>
</dbReference>
<dbReference type="GO" id="GO:0008270">
    <property type="term" value="F:zinc ion binding"/>
    <property type="evidence" value="ECO:0000318"/>
    <property type="project" value="GO_Central"/>
</dbReference>
<dbReference type="GO" id="GO:0006730">
    <property type="term" value="P:one-carbon metabolic process"/>
    <property type="evidence" value="ECO:0007669"/>
    <property type="project" value="UniProtKB-UniRule"/>
</dbReference>
<dbReference type="GO" id="GO:0006729">
    <property type="term" value="P:tetrahydrobiopterin biosynthetic process"/>
    <property type="evidence" value="ECO:0000318"/>
    <property type="project" value="GO_Central"/>
</dbReference>
<dbReference type="GO" id="GO:0046654">
    <property type="term" value="P:tetrahydrofolate biosynthetic process"/>
    <property type="evidence" value="ECO:0007669"/>
    <property type="project" value="UniProtKB-UniRule"/>
</dbReference>
<dbReference type="FunFam" id="1.10.286.10:FF:000005">
    <property type="entry name" value="GTP cyclohydrolase 1"/>
    <property type="match status" value="1"/>
</dbReference>
<dbReference type="FunFam" id="3.30.1130.10:FF:000001">
    <property type="entry name" value="GTP cyclohydrolase 1"/>
    <property type="match status" value="1"/>
</dbReference>
<dbReference type="Gene3D" id="1.10.286.10">
    <property type="match status" value="1"/>
</dbReference>
<dbReference type="Gene3D" id="3.30.1130.10">
    <property type="match status" value="1"/>
</dbReference>
<dbReference type="HAMAP" id="MF_00223">
    <property type="entry name" value="FolE"/>
    <property type="match status" value="1"/>
</dbReference>
<dbReference type="InterPro" id="IPR043133">
    <property type="entry name" value="GTP-CH-I_C/QueF"/>
</dbReference>
<dbReference type="InterPro" id="IPR043134">
    <property type="entry name" value="GTP-CH-I_N"/>
</dbReference>
<dbReference type="InterPro" id="IPR001474">
    <property type="entry name" value="GTP_CycHdrlase_I"/>
</dbReference>
<dbReference type="InterPro" id="IPR018234">
    <property type="entry name" value="GTP_CycHdrlase_I_CS"/>
</dbReference>
<dbReference type="InterPro" id="IPR020602">
    <property type="entry name" value="GTP_CycHdrlase_I_dom"/>
</dbReference>
<dbReference type="NCBIfam" id="TIGR00063">
    <property type="entry name" value="folE"/>
    <property type="match status" value="1"/>
</dbReference>
<dbReference type="NCBIfam" id="NF006825">
    <property type="entry name" value="PRK09347.1-2"/>
    <property type="match status" value="1"/>
</dbReference>
<dbReference type="NCBIfam" id="NF006826">
    <property type="entry name" value="PRK09347.1-3"/>
    <property type="match status" value="1"/>
</dbReference>
<dbReference type="PANTHER" id="PTHR11109:SF7">
    <property type="entry name" value="GTP CYCLOHYDROLASE 1"/>
    <property type="match status" value="1"/>
</dbReference>
<dbReference type="PANTHER" id="PTHR11109">
    <property type="entry name" value="GTP CYCLOHYDROLASE I"/>
    <property type="match status" value="1"/>
</dbReference>
<dbReference type="Pfam" id="PF01227">
    <property type="entry name" value="GTP_cyclohydroI"/>
    <property type="match status" value="1"/>
</dbReference>
<dbReference type="SUPFAM" id="SSF55620">
    <property type="entry name" value="Tetrahydrobiopterin biosynthesis enzymes-like"/>
    <property type="match status" value="1"/>
</dbReference>
<dbReference type="PROSITE" id="PS00859">
    <property type="entry name" value="GTP_CYCLOHYDROL_1_1"/>
    <property type="match status" value="1"/>
</dbReference>
<dbReference type="PROSITE" id="PS00860">
    <property type="entry name" value="GTP_CYCLOHYDROL_1_2"/>
    <property type="match status" value="1"/>
</dbReference>
<feature type="chain" id="PRO_0000119387" description="GTP cyclohydrolase 1">
    <location>
        <begin position="1"/>
        <end position="196"/>
    </location>
</feature>
<feature type="binding site" evidence="2">
    <location>
        <position position="85"/>
    </location>
    <ligand>
        <name>Zn(2+)</name>
        <dbReference type="ChEBI" id="CHEBI:29105"/>
    </ligand>
</feature>
<feature type="binding site" evidence="2">
    <location>
        <position position="88"/>
    </location>
    <ligand>
        <name>Zn(2+)</name>
        <dbReference type="ChEBI" id="CHEBI:29105"/>
    </ligand>
</feature>
<feature type="binding site" evidence="2">
    <location>
        <position position="156"/>
    </location>
    <ligand>
        <name>Zn(2+)</name>
        <dbReference type="ChEBI" id="CHEBI:29105"/>
    </ligand>
</feature>
<comment type="catalytic activity">
    <reaction evidence="2">
        <text>GTP + H2O = 7,8-dihydroneopterin 3'-triphosphate + formate + H(+)</text>
        <dbReference type="Rhea" id="RHEA:17473"/>
        <dbReference type="ChEBI" id="CHEBI:15377"/>
        <dbReference type="ChEBI" id="CHEBI:15378"/>
        <dbReference type="ChEBI" id="CHEBI:15740"/>
        <dbReference type="ChEBI" id="CHEBI:37565"/>
        <dbReference type="ChEBI" id="CHEBI:58462"/>
        <dbReference type="EC" id="3.5.4.16"/>
    </reaction>
</comment>
<comment type="pathway">
    <text evidence="2">Cofactor biosynthesis; 7,8-dihydroneopterin triphosphate biosynthesis; 7,8-dihydroneopterin triphosphate from GTP: step 1/1.</text>
</comment>
<comment type="subunit">
    <text evidence="1">Toroid-shaped homodecamer, composed of two pentamers of five dimers.</text>
</comment>
<comment type="similarity">
    <text evidence="2">Belongs to the GTP cyclohydrolase I family.</text>
</comment>
<name>GCH1_BACTN</name>
<keyword id="KW-0342">GTP-binding</keyword>
<keyword id="KW-0378">Hydrolase</keyword>
<keyword id="KW-0479">Metal-binding</keyword>
<keyword id="KW-0547">Nucleotide-binding</keyword>
<keyword id="KW-0554">One-carbon metabolism</keyword>
<keyword id="KW-1185">Reference proteome</keyword>
<keyword id="KW-0862">Zinc</keyword>
<organism>
    <name type="scientific">Bacteroides thetaiotaomicron (strain ATCC 29148 / DSM 2079 / JCM 5827 / CCUG 10774 / NCTC 10582 / VPI-5482 / E50)</name>
    <dbReference type="NCBI Taxonomy" id="226186"/>
    <lineage>
        <taxon>Bacteria</taxon>
        <taxon>Pseudomonadati</taxon>
        <taxon>Bacteroidota</taxon>
        <taxon>Bacteroidia</taxon>
        <taxon>Bacteroidales</taxon>
        <taxon>Bacteroidaceae</taxon>
        <taxon>Bacteroides</taxon>
    </lineage>
</organism>
<reference key="1">
    <citation type="journal article" date="2003" name="Science">
        <title>A genomic view of the human-Bacteroides thetaiotaomicron symbiosis.</title>
        <authorList>
            <person name="Xu J."/>
            <person name="Bjursell M.K."/>
            <person name="Himrod J."/>
            <person name="Deng S."/>
            <person name="Carmichael L.K."/>
            <person name="Chiang H.C."/>
            <person name="Hooper L.V."/>
            <person name="Gordon J.I."/>
        </authorList>
    </citation>
    <scope>NUCLEOTIDE SEQUENCE [LARGE SCALE GENOMIC DNA]</scope>
    <source>
        <strain>ATCC 29148 / DSM 2079 / JCM 5827 / CCUG 10774 / NCTC 10582 / VPI-5482 / E50</strain>
    </source>
</reference>
<protein>
    <recommendedName>
        <fullName evidence="2">GTP cyclohydrolase 1</fullName>
        <ecNumber evidence="2">3.5.4.16</ecNumber>
    </recommendedName>
    <alternativeName>
        <fullName evidence="2">GTP cyclohydrolase I</fullName>
        <shortName evidence="2">GTP-CH-I</shortName>
    </alternativeName>
</protein>
<accession>Q8A0U0</accession>